<proteinExistence type="evidence at protein level"/>
<name>INADL_RAT</name>
<protein>
    <recommendedName>
        <fullName evidence="4">InaD-like protein</fullName>
        <shortName evidence="4">Inadl protein</shortName>
    </recommendedName>
    <alternativeName>
        <fullName evidence="3">Channel-interacting PDZ domain-containing protein</fullName>
    </alternativeName>
    <alternativeName>
        <fullName evidence="3">Pals1-associated tight junction protein</fullName>
    </alternativeName>
    <alternativeName>
        <fullName evidence="4">Protein associated to tight junctions</fullName>
    </alternativeName>
</protein>
<accession>F1MAD2</accession>
<comment type="function">
    <text evidence="2 3 4">Scaffolding protein that facilitates the localization of proteins to the cell membrane (By similarity). Required for the correct formation of tight junctions and epithelial apico-basal polarity (By similarity). Acts (via its L27 domain) as an apical connector and elongation factor for multistranded TJP1/ZO1 condensates that form a tight junction belt, thereby required for the formation of the tight junction-mediated cell barrier (By similarity). Positively regulates epithelial cell microtubule elongation and cell migration, possibly via facilitating localization of PRKCI/aPKC and PAR3D/PAR3 at the leading edge of migrating cells (By similarity). Plays a role in the correct reorientation of the microtubule-organizing center during epithelial migration (By similarity). May regulate the surface expression and/or function of ASIC3 in sensory neurons (By similarity). May recruit ARHGEF18 to apical cell-cell boundaries (By similarity).</text>
</comment>
<comment type="subunit">
    <text evidence="1 2 3 4 9">Forms a ternary complex with PALS1 and CRB1 (By similarity). Component of a complex whose core is composed of ARHGAP17, AMOT, PALS1, INADL/PATJ and PARD3/PAR3 (By similarity). Forms a heterotrimeric complex composed of MMP5, LIN7B and PATJ; the N-terminal L27 domain of PALS1 interacts with the L27 domain of PATJ and the C-terminal L27 domain of PALS1 interacts with the L27 domain of LIN7B (PubMed:22337881). Component of a complex composed of CRB3, PALS1 and PATJ (By similarity). As part of the Crumbs complex; interacts with WWP1, the interaction is enhanced by AMOTL2 and facilitates WWP1 localization to the plasma membrane (By similarity). The Crumbs complex promotes monoubiquitination of AMOTL2 by WWP1, which activates the Hippo signaling pathway (By similarity). Interacts (via N-terminus) with PALS1/PALS (via PDZ domain) (By similarity). Interacts with TJP3/ZO-3 and CLDN1/claudin-1 (By similarity). Interacts with ASIC3, KCNJ10, KCNJ15, GRIN2A, GRIN2B, GRIN2C, GRIN2D, NLGN2, and HTR2A (By similarity). Interacts with MPP7 (By similarity). Directly interacts with HTR4 (By similarity). Interacts (via PDZ domain 8) with WWC1 (via the ADDV motif) (By similarity). Interacts with SLC6A4 (By similarity). Interacts (via C-terminus) with ARHGEF18 (By similarity). Interacts with NPHP1 (By similarity). Interacts with PARD3/PAR3 (By similarity). Interacts (via PDZ1-6 domains) with TJP1/ZO1; the interaction is required for attachment and extension of TJP1/ZO1 condensates along the apical cell interface (By similarity).</text>
</comment>
<comment type="subcellular location">
    <subcellularLocation>
        <location evidence="4">Cell junction</location>
        <location evidence="4">Tight junction</location>
    </subcellularLocation>
    <subcellularLocation>
        <location evidence="4">Apical cell membrane</location>
        <topology evidence="4">Peripheral membrane protein</topology>
    </subcellularLocation>
    <subcellularLocation>
        <location evidence="3">Cytoplasm</location>
        <location evidence="3">Perinuclear region</location>
    </subcellularLocation>
    <text evidence="2 3 4">Localizes to the apical region at the start of epithelial cell polarization then locates to tight junctions as polarization is completed (By similarity). Localizes to the most apical strand of TJP1/ZO1 condensates during junctional condensation elongation (By similarity). Localized in the paranodal region of myelinating Schwann cells (By similarity). Localized to the leading edge of the actin cortex of migrating epithelia cells (By similarity).</text>
</comment>
<comment type="tissue specificity">
    <text evidence="8">Abundantly expressed in germ cells, also expressed in testes and seminiferous tubules, with faint expression in Sertoli cells (at protein level).</text>
</comment>
<comment type="domain">
    <text evidence="4">The L27 domain (also called Maguk recruitment domain) is required for interaction with PALS1 and CRB3, and PALS1 localization to tight junctions.</text>
</comment>
<comment type="domain">
    <text evidence="4">The PDZ domain 6 mediates interaction with the C-terminus of TJP3 and is crucial for localization to the tight junctions (By similarity). The PDZ domain 8 interacts with CLDN1 but is not required for proper localization (By similarity).</text>
</comment>
<dbReference type="EMBL" id="AABR07049320">
    <property type="status" value="NOT_ANNOTATED_CDS"/>
    <property type="molecule type" value="Genomic_DNA"/>
</dbReference>
<dbReference type="EMBL" id="AABR07049321">
    <property type="status" value="NOT_ANNOTATED_CDS"/>
    <property type="molecule type" value="Genomic_DNA"/>
</dbReference>
<dbReference type="EMBL" id="AABR07049322">
    <property type="status" value="NOT_ANNOTATED_CDS"/>
    <property type="molecule type" value="Genomic_DNA"/>
</dbReference>
<dbReference type="EMBL" id="AABR07049323">
    <property type="status" value="NOT_ANNOTATED_CDS"/>
    <property type="molecule type" value="Genomic_DNA"/>
</dbReference>
<dbReference type="EMBL" id="AABR07049324">
    <property type="status" value="NOT_ANNOTATED_CDS"/>
    <property type="molecule type" value="Genomic_DNA"/>
</dbReference>
<dbReference type="EMBL" id="AABR07049325">
    <property type="status" value="NOT_ANNOTATED_CDS"/>
    <property type="molecule type" value="Genomic_DNA"/>
</dbReference>
<dbReference type="EMBL" id="AABR07049326">
    <property type="status" value="NOT_ANNOTATED_CDS"/>
    <property type="molecule type" value="Genomic_DNA"/>
</dbReference>
<dbReference type="RefSeq" id="NP_536323.1">
    <property type="nucleotide sequence ID" value="NM_080398.1"/>
</dbReference>
<dbReference type="RefSeq" id="XP_006238486.1">
    <property type="nucleotide sequence ID" value="XM_006238424.3"/>
</dbReference>
<dbReference type="PDB" id="3UIT">
    <property type="method" value="X-ray"/>
    <property type="resolution" value="2.05 A"/>
    <property type="chains" value="A/B/C/D=1-68"/>
</dbReference>
<dbReference type="PDBsum" id="3UIT"/>
<dbReference type="SMR" id="F1MAD2"/>
<dbReference type="CORUM" id="F1MAD2"/>
<dbReference type="FunCoup" id="F1MAD2">
    <property type="interactions" value="617"/>
</dbReference>
<dbReference type="STRING" id="10116.ENSRNOP00000010211"/>
<dbReference type="GlyGen" id="F1MAD2">
    <property type="glycosylation" value="1 site"/>
</dbReference>
<dbReference type="iPTMnet" id="F1MAD2"/>
<dbReference type="PhosphoSitePlus" id="F1MAD2"/>
<dbReference type="PaxDb" id="10116-ENSRNOP00000010211"/>
<dbReference type="Ensembl" id="ENSRNOT00000010211.9">
    <property type="protein sequence ID" value="ENSRNOP00000010211.6"/>
    <property type="gene ID" value="ENSRNOG00000007551.9"/>
</dbReference>
<dbReference type="GeneID" id="140581"/>
<dbReference type="KEGG" id="rno:140581"/>
<dbReference type="AGR" id="RGD:1565362"/>
<dbReference type="CTD" id="10207"/>
<dbReference type="RGD" id="1565362">
    <property type="gene designation" value="Patj"/>
</dbReference>
<dbReference type="eggNOG" id="KOG0708">
    <property type="taxonomic scope" value="Eukaryota"/>
</dbReference>
<dbReference type="eggNOG" id="KOG3528">
    <property type="taxonomic scope" value="Eukaryota"/>
</dbReference>
<dbReference type="GeneTree" id="ENSGT00940000155136"/>
<dbReference type="HOGENOM" id="CLU_002378_1_0_1"/>
<dbReference type="InParanoid" id="F1MAD2"/>
<dbReference type="TreeFam" id="TF330709"/>
<dbReference type="PRO" id="PR:F1MAD2"/>
<dbReference type="Proteomes" id="UP000002494">
    <property type="component" value="Chromosome 5"/>
</dbReference>
<dbReference type="Bgee" id="ENSRNOG00000007551">
    <property type="expression patterns" value="Expressed in cerebellum and 18 other cell types or tissues"/>
</dbReference>
<dbReference type="GO" id="GO:0045177">
    <property type="term" value="C:apical part of cell"/>
    <property type="evidence" value="ECO:0000266"/>
    <property type="project" value="RGD"/>
</dbReference>
<dbReference type="GO" id="GO:0016324">
    <property type="term" value="C:apical plasma membrane"/>
    <property type="evidence" value="ECO:0000250"/>
    <property type="project" value="UniProtKB"/>
</dbReference>
<dbReference type="GO" id="GO:0005923">
    <property type="term" value="C:bicellular tight junction"/>
    <property type="evidence" value="ECO:0000266"/>
    <property type="project" value="RGD"/>
</dbReference>
<dbReference type="GO" id="GO:0005737">
    <property type="term" value="C:cytoplasm"/>
    <property type="evidence" value="ECO:0000318"/>
    <property type="project" value="GO_Central"/>
</dbReference>
<dbReference type="GO" id="GO:0048471">
    <property type="term" value="C:perinuclear region of cytoplasm"/>
    <property type="evidence" value="ECO:0000266"/>
    <property type="project" value="RGD"/>
</dbReference>
<dbReference type="GO" id="GO:0005886">
    <property type="term" value="C:plasma membrane"/>
    <property type="evidence" value="ECO:0000318"/>
    <property type="project" value="GO_Central"/>
</dbReference>
<dbReference type="GO" id="GO:0032991">
    <property type="term" value="C:protein-containing complex"/>
    <property type="evidence" value="ECO:0000314"/>
    <property type="project" value="RGD"/>
</dbReference>
<dbReference type="GO" id="GO:0035003">
    <property type="term" value="C:subapical complex"/>
    <property type="evidence" value="ECO:0000266"/>
    <property type="project" value="RGD"/>
</dbReference>
<dbReference type="GO" id="GO:0070160">
    <property type="term" value="C:tight junction"/>
    <property type="evidence" value="ECO:0000250"/>
    <property type="project" value="UniProtKB"/>
</dbReference>
<dbReference type="GO" id="GO:0035089">
    <property type="term" value="P:establishment of apical/basal cell polarity"/>
    <property type="evidence" value="ECO:0000250"/>
    <property type="project" value="UniProtKB"/>
</dbReference>
<dbReference type="GO" id="GO:0031023">
    <property type="term" value="P:microtubule organizing center organization"/>
    <property type="evidence" value="ECO:0000266"/>
    <property type="project" value="RGD"/>
</dbReference>
<dbReference type="GO" id="GO:0010634">
    <property type="term" value="P:positive regulation of epithelial cell migration"/>
    <property type="evidence" value="ECO:0000266"/>
    <property type="project" value="RGD"/>
</dbReference>
<dbReference type="GO" id="GO:0070507">
    <property type="term" value="P:regulation of microtubule cytoskeleton organization"/>
    <property type="evidence" value="ECO:0000266"/>
    <property type="project" value="RGD"/>
</dbReference>
<dbReference type="GO" id="GO:0032880">
    <property type="term" value="P:regulation of protein localization"/>
    <property type="evidence" value="ECO:0000266"/>
    <property type="project" value="RGD"/>
</dbReference>
<dbReference type="GO" id="GO:0120192">
    <property type="term" value="P:tight junction assembly"/>
    <property type="evidence" value="ECO:0000250"/>
    <property type="project" value="UniProtKB"/>
</dbReference>
<dbReference type="CDD" id="cd06673">
    <property type="entry name" value="PDZ10_MUPP1-PDZ8_PATJ-like"/>
    <property type="match status" value="1"/>
</dbReference>
<dbReference type="CDD" id="cd06674">
    <property type="entry name" value="PDZ11_MUPP1-PDZ9_PATJ-like"/>
    <property type="match status" value="1"/>
</dbReference>
<dbReference type="CDD" id="cd06675">
    <property type="entry name" value="PDZ12_MUPP1-like"/>
    <property type="match status" value="1"/>
</dbReference>
<dbReference type="CDD" id="cd06689">
    <property type="entry name" value="PDZ1_MUPP1-like"/>
    <property type="match status" value="1"/>
</dbReference>
<dbReference type="CDD" id="cd06667">
    <property type="entry name" value="PDZ2_MUPP1-like"/>
    <property type="match status" value="1"/>
</dbReference>
<dbReference type="CDD" id="cd06791">
    <property type="entry name" value="PDZ3_MUPP1-like"/>
    <property type="match status" value="1"/>
</dbReference>
<dbReference type="CDD" id="cd06668">
    <property type="entry name" value="PDZ4_MUPP1-like"/>
    <property type="match status" value="1"/>
</dbReference>
<dbReference type="CDD" id="cd06669">
    <property type="entry name" value="PDZ5_MUPP1-like"/>
    <property type="match status" value="1"/>
</dbReference>
<dbReference type="CDD" id="cd06671">
    <property type="entry name" value="PDZ7_MUPP1-PD6_PATJ-like"/>
    <property type="match status" value="1"/>
</dbReference>
<dbReference type="CDD" id="cd06672">
    <property type="entry name" value="PDZ8_MUPP1-PDZ7_PATJ-PDZ2_INAD-like"/>
    <property type="match status" value="1"/>
</dbReference>
<dbReference type="FunFam" id="2.30.42.10:FF:000112">
    <property type="entry name" value="inaD-like protein isoform X3"/>
    <property type="match status" value="1"/>
</dbReference>
<dbReference type="FunFam" id="2.30.42.10:FF:000070">
    <property type="entry name" value="Multiple PDZ domain protein"/>
    <property type="match status" value="1"/>
</dbReference>
<dbReference type="FunFam" id="2.30.42.10:FF:000038">
    <property type="entry name" value="Multiple PDZ domain protein isoform X1"/>
    <property type="match status" value="1"/>
</dbReference>
<dbReference type="FunFam" id="2.30.42.10:FF:000051">
    <property type="entry name" value="Multiple PDZ domain protein isoform X1"/>
    <property type="match status" value="1"/>
</dbReference>
<dbReference type="FunFam" id="2.30.42.10:FF:000058">
    <property type="entry name" value="multiple PDZ domain protein isoform X1"/>
    <property type="match status" value="1"/>
</dbReference>
<dbReference type="FunFam" id="2.30.42.10:FF:000125">
    <property type="entry name" value="PATJ, crumbs cell polarity complex component"/>
    <property type="match status" value="1"/>
</dbReference>
<dbReference type="Gene3D" id="1.20.1440.360">
    <property type="match status" value="1"/>
</dbReference>
<dbReference type="Gene3D" id="2.30.42.10">
    <property type="match status" value="10"/>
</dbReference>
<dbReference type="InterPro" id="IPR015132">
    <property type="entry name" value="L27_2"/>
</dbReference>
<dbReference type="InterPro" id="IPR004172">
    <property type="entry name" value="L27_dom"/>
</dbReference>
<dbReference type="InterPro" id="IPR036892">
    <property type="entry name" value="L27_dom_sf"/>
</dbReference>
<dbReference type="InterPro" id="IPR001478">
    <property type="entry name" value="PDZ"/>
</dbReference>
<dbReference type="InterPro" id="IPR051342">
    <property type="entry name" value="PDZ_scaffold"/>
</dbReference>
<dbReference type="InterPro" id="IPR036034">
    <property type="entry name" value="PDZ_sf"/>
</dbReference>
<dbReference type="PANTHER" id="PTHR19964:SF11">
    <property type="entry name" value="INAD-LIKE PROTEIN"/>
    <property type="match status" value="1"/>
</dbReference>
<dbReference type="PANTHER" id="PTHR19964">
    <property type="entry name" value="MULTIPLE PDZ DOMAIN PROTEIN"/>
    <property type="match status" value="1"/>
</dbReference>
<dbReference type="Pfam" id="PF09045">
    <property type="entry name" value="L27_2"/>
    <property type="match status" value="1"/>
</dbReference>
<dbReference type="Pfam" id="PF00595">
    <property type="entry name" value="PDZ"/>
    <property type="match status" value="10"/>
</dbReference>
<dbReference type="SMART" id="SM00569">
    <property type="entry name" value="L27"/>
    <property type="match status" value="1"/>
</dbReference>
<dbReference type="SMART" id="SM00228">
    <property type="entry name" value="PDZ"/>
    <property type="match status" value="10"/>
</dbReference>
<dbReference type="SUPFAM" id="SSF101288">
    <property type="entry name" value="L27 domain"/>
    <property type="match status" value="1"/>
</dbReference>
<dbReference type="SUPFAM" id="SSF50156">
    <property type="entry name" value="PDZ domain-like"/>
    <property type="match status" value="10"/>
</dbReference>
<dbReference type="PROSITE" id="PS51022">
    <property type="entry name" value="L27"/>
    <property type="match status" value="1"/>
</dbReference>
<dbReference type="PROSITE" id="PS50106">
    <property type="entry name" value="PDZ"/>
    <property type="match status" value="10"/>
</dbReference>
<evidence type="ECO:0000250" key="1">
    <source>
        <dbReference type="UniProtKB" id="A0A5F4CJZ2"/>
    </source>
</evidence>
<evidence type="ECO:0000250" key="2">
    <source>
        <dbReference type="UniProtKB" id="E2QYC9"/>
    </source>
</evidence>
<evidence type="ECO:0000250" key="3">
    <source>
        <dbReference type="UniProtKB" id="Q63ZW7"/>
    </source>
</evidence>
<evidence type="ECO:0000250" key="4">
    <source>
        <dbReference type="UniProtKB" id="Q8NI35"/>
    </source>
</evidence>
<evidence type="ECO:0000255" key="5">
    <source>
        <dbReference type="PROSITE-ProRule" id="PRU00143"/>
    </source>
</evidence>
<evidence type="ECO:0000255" key="6">
    <source>
        <dbReference type="PROSITE-ProRule" id="PRU00365"/>
    </source>
</evidence>
<evidence type="ECO:0000256" key="7">
    <source>
        <dbReference type="SAM" id="MobiDB-lite"/>
    </source>
</evidence>
<evidence type="ECO:0000269" key="8">
    <source>
    </source>
</evidence>
<evidence type="ECO:0000269" key="9">
    <source>
    </source>
</evidence>
<evidence type="ECO:0000305" key="10"/>
<evidence type="ECO:0000312" key="11">
    <source>
        <dbReference type="Proteomes" id="UP000002494"/>
    </source>
</evidence>
<evidence type="ECO:0000312" key="12">
    <source>
        <dbReference type="RGD" id="1565362"/>
    </source>
</evidence>
<evidence type="ECO:0007744" key="13">
    <source>
    </source>
</evidence>
<evidence type="ECO:0007829" key="14">
    <source>
        <dbReference type="PDB" id="3UIT"/>
    </source>
</evidence>
<sequence>MPENPAAEKMQVLQVLDRLRGKLQEKGDTTQNEKLSAFYETLKSPLFNQILTLQQSIKQLKGQLSHIPSDCSANFDFSRKGLLVFTDGSITNGNAHRPCSSITASESLPWTQRSGNEDFTSVIQQMAQGRHIEYIDIERPSTGGLGFSVVALRSQSLGLIDIFVKEVHPGSVADRDQRLKENDQILAINDTPLDQNISHQQAIALLQQATGSLRLVVAREVGHTQSRTSTSSADTTLPETVRWGHTEDVELINDGSGLGFGIVGGKSSGVVVRTIVPGGLADRDGRLQTGDHILKIGSTNVQGMTSEQVAQVLRNCGNSVRMLVARDPVGEIAVTPPTPASLPVALPVVATRTLGSDSSPFETYNVELVKKDGQSLGIRIVGYVGTAHPGEASGIYVKSIIPGSAAYHNGQIQVNDKIVAVDGVNIQGFANQDVVEVLRNAGQVVHLTLVRRKTSLSASPFEQPSSREAVAEPPEVPELTGSLKPETNSRMEAEEIGERLDNLRKDTVQALEKPDVYPEDIPGCPENELKSRWENLLGPDYEVMVATLDTQIADDEELQKYSKLLPIHTLRLGMEVDSFDGHHYISSIAPGGPVDTLNLLQPEDELLEVNGVQLYGKSRREAVSFLKEVPPPFTLVCCRRLFDDEASVDEPRTVEPSLLEAEVDRSVDVSTEDDDGELALWSPEVKTVELVKDCKGLGFSILDYQDPLDPMRSVIVIRSLVADGVAERSGELLPGDRLVSVNEFSLDNATLAEAVEVLKAVPPGVVHLGICKPLVEEEKEEKEEHFIFHSNNNGDNSESPETVHEIHSSLILEAPQGFRDEPYLEELVDEPFLDLGKSLQFQQKDMDSSSEAWEMHEFLSPRLERRGEEREMLVDEEYEIYQDRLRDMEAHPPPPHIREPTSASPRLDLQAGPQWLHADLSGGEILECHDTESMMTAYPQEMQDYSFSTTDMMKETFGLDSRPPMPSSEGNGQHGRFDDLEHLHSLVSHGLDLGMMTPSDLQGPGVLVDLPAVTQRREQEELPLYRLPSARVVTKPSSHVGMVSSRHANAACELPEREEGEGEETPNFSHWGPPRIVEIFREPNVSLGISIVGGQTVIKRLKNGEELKGIFIKQVLEDSPAGKTKALKTGDKILEVSGVDLQNASHAEAVEAIKSAGNPVVFVVQSLSSTPRVIPSVNNKGKTPPQNQDQNTQEKKAKRHGTAPPPMKLPPPYRAPSADTEESEEDSALTDKKIRQRYADLPGELHIIELEKDKNGLGLSLAGNKDRSRMSIFVVGINPDGPAAADGRMRVGDELLEINNQILYGRSHQNASAIIKTAPTRVKLVFIRNEDAVNQMAVAPFPVPSHSPSPVEDLGGTEPVSSEEDSSVDAKPLPERESSKPEDLTQAVDDSMVAEQEKASESPDSAARQMKQPGYSAQVSSSSQEIPSAPAPLCQSTHADVTGSGNFQAPLSVDPAPLSVDPATCPIVPGQEMIIEISKGRSGLGLSIVGGKDTPLDAIVIHEVYEEGAAARDGRLWAGDQILEVNGVDLRSSSHEEAITALRQTPQKVRLVIYRDEAQYRDEENLEVFLVDLQKKTGRGLGLSIVGKRSGSGVFISDIVKGGAADLDGRLIRGDQILSVNGEDVRQASQETVATILKCVQGLVQLEIGRLRAGSWASSRKTSQNSQGDQHSAHSSCRPSFAPVITSLQNLVGTKRSSDPPQKCTEEEPRTVEIIRELSDALGVSIAGGKGSPLGDIPIFIAMIQANGVAARTQKLKVGDRIVSINGQPLDGLSHTDAVNLLKNAFGRIILQVVADTNISAIATQLEMMSAGSQLGSPTADRHPQDPEELLQRTAD</sequence>
<keyword id="KW-0002">3D-structure</keyword>
<keyword id="KW-0965">Cell junction</keyword>
<keyword id="KW-1003">Cell membrane</keyword>
<keyword id="KW-0963">Cytoplasm</keyword>
<keyword id="KW-0472">Membrane</keyword>
<keyword id="KW-0597">Phosphoprotein</keyword>
<keyword id="KW-1185">Reference proteome</keyword>
<keyword id="KW-0677">Repeat</keyword>
<keyword id="KW-0796">Tight junction</keyword>
<feature type="chain" id="PRO_0000447579" description="InaD-like protein">
    <location>
        <begin position="1"/>
        <end position="1836"/>
    </location>
</feature>
<feature type="domain" description="L27" evidence="6">
    <location>
        <begin position="1"/>
        <end position="65"/>
    </location>
</feature>
<feature type="domain" description="PDZ 1" evidence="5">
    <location>
        <begin position="134"/>
        <end position="221"/>
    </location>
</feature>
<feature type="domain" description="PDZ 2" evidence="5">
    <location>
        <begin position="248"/>
        <end position="328"/>
    </location>
</feature>
<feature type="domain" description="PDZ 3" evidence="5">
    <location>
        <begin position="365"/>
        <end position="453"/>
    </location>
</feature>
<feature type="domain" description="PDZ 4" evidence="5">
    <location>
        <begin position="555"/>
        <end position="641"/>
    </location>
</feature>
<feature type="domain" description="PDZ 5" evidence="5">
    <location>
        <begin position="687"/>
        <end position="773"/>
    </location>
</feature>
<feature type="domain" description="PDZ 6" evidence="5">
    <location>
        <begin position="1074"/>
        <end position="1166"/>
    </location>
</feature>
<feature type="domain" description="PDZ 7" evidence="5">
    <location>
        <begin position="1245"/>
        <end position="1328"/>
    </location>
</feature>
<feature type="domain" description="PDZ 8" evidence="5">
    <location>
        <begin position="1472"/>
        <end position="1555"/>
    </location>
</feature>
<feature type="domain" description="PDZ 9" evidence="5">
    <location>
        <begin position="1568"/>
        <end position="1650"/>
    </location>
</feature>
<feature type="domain" description="PDZ 10" evidence="5">
    <location>
        <begin position="1709"/>
        <end position="1795"/>
    </location>
</feature>
<feature type="region of interest" description="Disordered" evidence="7">
    <location>
        <begin position="456"/>
        <end position="492"/>
    </location>
</feature>
<feature type="region of interest" description="Disordered" evidence="7">
    <location>
        <begin position="1173"/>
        <end position="1232"/>
    </location>
</feature>
<feature type="region of interest" description="Disordered" evidence="7">
    <location>
        <begin position="1341"/>
        <end position="1448"/>
    </location>
</feature>
<feature type="region of interest" description="Disordered" evidence="7">
    <location>
        <begin position="1657"/>
        <end position="1678"/>
    </location>
</feature>
<feature type="region of interest" description="Disordered" evidence="7">
    <location>
        <begin position="1813"/>
        <end position="1836"/>
    </location>
</feature>
<feature type="compositionally biased region" description="Polar residues" evidence="7">
    <location>
        <begin position="456"/>
        <end position="466"/>
    </location>
</feature>
<feature type="compositionally biased region" description="Polar residues" evidence="7">
    <location>
        <begin position="1173"/>
        <end position="1191"/>
    </location>
</feature>
<feature type="compositionally biased region" description="Pro residues" evidence="7">
    <location>
        <begin position="1203"/>
        <end position="1214"/>
    </location>
</feature>
<feature type="compositionally biased region" description="Acidic residues" evidence="7">
    <location>
        <begin position="1219"/>
        <end position="1228"/>
    </location>
</feature>
<feature type="compositionally biased region" description="Basic and acidic residues" evidence="7">
    <location>
        <begin position="1372"/>
        <end position="1383"/>
    </location>
</feature>
<feature type="compositionally biased region" description="Polar residues" evidence="7">
    <location>
        <begin position="1415"/>
        <end position="1426"/>
    </location>
</feature>
<feature type="compositionally biased region" description="Polar residues" evidence="7">
    <location>
        <begin position="1434"/>
        <end position="1448"/>
    </location>
</feature>
<feature type="modified residue" description="Phosphoserine" evidence="3">
    <location>
        <position position="455"/>
    </location>
</feature>
<feature type="modified residue" description="Phosphoserine" evidence="4">
    <location>
        <position position="459"/>
    </location>
</feature>
<feature type="modified residue" description="Phosphoserine" evidence="3">
    <location>
        <position position="482"/>
    </location>
</feature>
<feature type="modified residue" description="Phosphoserine" evidence="3">
    <location>
        <position position="647"/>
    </location>
</feature>
<feature type="modified residue" description="Phosphoserine" evidence="3">
    <location>
        <position position="1217"/>
    </location>
</feature>
<feature type="modified residue" description="Phosphothreonine" evidence="4">
    <location>
        <position position="1545"/>
    </location>
</feature>
<feature type="helix" evidence="14">
    <location>
        <begin position="11"/>
        <end position="26"/>
    </location>
</feature>
<feature type="helix" evidence="14">
    <location>
        <begin position="32"/>
        <end position="43"/>
    </location>
</feature>
<feature type="helix" evidence="14">
    <location>
        <begin position="45"/>
        <end position="56"/>
    </location>
</feature>
<reference evidence="11" key="1">
    <citation type="journal article" date="2004" name="Nature">
        <title>Genome sequence of the Brown Norway rat yields insights into mammalian evolution.</title>
        <authorList>
            <person name="Gibbs R.A."/>
            <person name="Weinstock G.M."/>
            <person name="Metzker M.L."/>
            <person name="Muzny D.M."/>
            <person name="Sodergren E.J."/>
            <person name="Scherer S."/>
            <person name="Scott G."/>
            <person name="Steffen D."/>
            <person name="Worley K.C."/>
            <person name="Burch P.E."/>
            <person name="Okwuonu G."/>
            <person name="Hines S."/>
            <person name="Lewis L."/>
            <person name="Deramo C."/>
            <person name="Delgado O."/>
            <person name="Dugan-Rocha S."/>
            <person name="Miner G."/>
            <person name="Morgan M."/>
            <person name="Hawes A."/>
            <person name="Gill R."/>
            <person name="Holt R.A."/>
            <person name="Adams M.D."/>
            <person name="Amanatides P.G."/>
            <person name="Baden-Tillson H."/>
            <person name="Barnstead M."/>
            <person name="Chin S."/>
            <person name="Evans C.A."/>
            <person name="Ferriera S."/>
            <person name="Fosler C."/>
            <person name="Glodek A."/>
            <person name="Gu Z."/>
            <person name="Jennings D."/>
            <person name="Kraft C.L."/>
            <person name="Nguyen T."/>
            <person name="Pfannkoch C.M."/>
            <person name="Sitter C."/>
            <person name="Sutton G.G."/>
            <person name="Venter J.C."/>
            <person name="Woodage T."/>
            <person name="Smith D."/>
            <person name="Lee H.-M."/>
            <person name="Gustafson E."/>
            <person name="Cahill P."/>
            <person name="Kana A."/>
            <person name="Doucette-Stamm L."/>
            <person name="Weinstock K."/>
            <person name="Fechtel K."/>
            <person name="Weiss R.B."/>
            <person name="Dunn D.M."/>
            <person name="Green E.D."/>
            <person name="Blakesley R.W."/>
            <person name="Bouffard G.G."/>
            <person name="De Jong P.J."/>
            <person name="Osoegawa K."/>
            <person name="Zhu B."/>
            <person name="Marra M."/>
            <person name="Schein J."/>
            <person name="Bosdet I."/>
            <person name="Fjell C."/>
            <person name="Jones S."/>
            <person name="Krzywinski M."/>
            <person name="Mathewson C."/>
            <person name="Siddiqui A."/>
            <person name="Wye N."/>
            <person name="McPherson J."/>
            <person name="Zhao S."/>
            <person name="Fraser C.M."/>
            <person name="Shetty J."/>
            <person name="Shatsman S."/>
            <person name="Geer K."/>
            <person name="Chen Y."/>
            <person name="Abramzon S."/>
            <person name="Nierman W.C."/>
            <person name="Havlak P.H."/>
            <person name="Chen R."/>
            <person name="Durbin K.J."/>
            <person name="Egan A."/>
            <person name="Ren Y."/>
            <person name="Song X.-Z."/>
            <person name="Li B."/>
            <person name="Liu Y."/>
            <person name="Qin X."/>
            <person name="Cawley S."/>
            <person name="Cooney A.J."/>
            <person name="D'Souza L.M."/>
            <person name="Martin K."/>
            <person name="Wu J.Q."/>
            <person name="Gonzalez-Garay M.L."/>
            <person name="Jackson A.R."/>
            <person name="Kalafus K.J."/>
            <person name="McLeod M.P."/>
            <person name="Milosavljevic A."/>
            <person name="Virk D."/>
            <person name="Volkov A."/>
            <person name="Wheeler D.A."/>
            <person name="Zhang Z."/>
            <person name="Bailey J.A."/>
            <person name="Eichler E.E."/>
            <person name="Tuzun E."/>
            <person name="Birney E."/>
            <person name="Mongin E."/>
            <person name="Ureta-Vidal A."/>
            <person name="Woodwark C."/>
            <person name="Zdobnov E."/>
            <person name="Bork P."/>
            <person name="Suyama M."/>
            <person name="Torrents D."/>
            <person name="Alexandersson M."/>
            <person name="Trask B.J."/>
            <person name="Young J.M."/>
            <person name="Huang H."/>
            <person name="Wang H."/>
            <person name="Xing H."/>
            <person name="Daniels S."/>
            <person name="Gietzen D."/>
            <person name="Schmidt J."/>
            <person name="Stevens K."/>
            <person name="Vitt U."/>
            <person name="Wingrove J."/>
            <person name="Camara F."/>
            <person name="Mar Alba M."/>
            <person name="Abril J.F."/>
            <person name="Guigo R."/>
            <person name="Smit A."/>
            <person name="Dubchak I."/>
            <person name="Rubin E.M."/>
            <person name="Couronne O."/>
            <person name="Poliakov A."/>
            <person name="Huebner N."/>
            <person name="Ganten D."/>
            <person name="Goesele C."/>
            <person name="Hummel O."/>
            <person name="Kreitler T."/>
            <person name="Lee Y.-A."/>
            <person name="Monti J."/>
            <person name="Schulz H."/>
            <person name="Zimdahl H."/>
            <person name="Himmelbauer H."/>
            <person name="Lehrach H."/>
            <person name="Jacob H.J."/>
            <person name="Bromberg S."/>
            <person name="Gullings-Handley J."/>
            <person name="Jensen-Seaman M.I."/>
            <person name="Kwitek A.E."/>
            <person name="Lazar J."/>
            <person name="Pasko D."/>
            <person name="Tonellato P.J."/>
            <person name="Twigger S."/>
            <person name="Ponting C.P."/>
            <person name="Duarte J.M."/>
            <person name="Rice S."/>
            <person name="Goodstadt L."/>
            <person name="Beatson S.A."/>
            <person name="Emes R.D."/>
            <person name="Winter E.E."/>
            <person name="Webber C."/>
            <person name="Brandt P."/>
            <person name="Nyakatura G."/>
            <person name="Adetobi M."/>
            <person name="Chiaromonte F."/>
            <person name="Elnitski L."/>
            <person name="Eswara P."/>
            <person name="Hardison R.C."/>
            <person name="Hou M."/>
            <person name="Kolbe D."/>
            <person name="Makova K."/>
            <person name="Miller W."/>
            <person name="Nekrutenko A."/>
            <person name="Riemer C."/>
            <person name="Schwartz S."/>
            <person name="Taylor J."/>
            <person name="Yang S."/>
            <person name="Zhang Y."/>
            <person name="Lindpaintner K."/>
            <person name="Andrews T.D."/>
            <person name="Caccamo M."/>
            <person name="Clamp M."/>
            <person name="Clarke L."/>
            <person name="Curwen V."/>
            <person name="Durbin R.M."/>
            <person name="Eyras E."/>
            <person name="Searle S.M."/>
            <person name="Cooper G.M."/>
            <person name="Batzoglou S."/>
            <person name="Brudno M."/>
            <person name="Sidow A."/>
            <person name="Stone E.A."/>
            <person name="Payseur B.A."/>
            <person name="Bourque G."/>
            <person name="Lopez-Otin C."/>
            <person name="Puente X.S."/>
            <person name="Chakrabarti K."/>
            <person name="Chatterji S."/>
            <person name="Dewey C."/>
            <person name="Pachter L."/>
            <person name="Bray N."/>
            <person name="Yap V.B."/>
            <person name="Caspi A."/>
            <person name="Tesler G."/>
            <person name="Pevzner P.A."/>
            <person name="Haussler D."/>
            <person name="Roskin K.M."/>
            <person name="Baertsch R."/>
            <person name="Clawson H."/>
            <person name="Furey T.S."/>
            <person name="Hinrichs A.S."/>
            <person name="Karolchik D."/>
            <person name="Kent W.J."/>
            <person name="Rosenbloom K.R."/>
            <person name="Trumbower H."/>
            <person name="Weirauch M."/>
            <person name="Cooper D.N."/>
            <person name="Stenson P.D."/>
            <person name="Ma B."/>
            <person name="Brent M."/>
            <person name="Arumugam M."/>
            <person name="Shteynberg D."/>
            <person name="Copley R.R."/>
            <person name="Taylor M.S."/>
            <person name="Riethman H."/>
            <person name="Mudunuri U."/>
            <person name="Peterson J."/>
            <person name="Guyer M."/>
            <person name="Felsenfeld A."/>
            <person name="Old S."/>
            <person name="Mockrin S."/>
            <person name="Collins F.S."/>
        </authorList>
    </citation>
    <scope>NUCLEOTIDE SEQUENCE [LARGE SCALE GENOMIC DNA]</scope>
    <source>
        <strain evidence="11">Brown Norway</strain>
    </source>
</reference>
<reference evidence="13" key="2">
    <citation type="journal article" date="2012" name="Nat. Commun.">
        <title>Quantitative maps of protein phosphorylation sites across 14 different rat organs and tissues.</title>
        <authorList>
            <person name="Lundby A."/>
            <person name="Secher A."/>
            <person name="Lage K."/>
            <person name="Nordsborg N.B."/>
            <person name="Dmytriyev A."/>
            <person name="Lundby C."/>
            <person name="Olsen J.V."/>
        </authorList>
    </citation>
    <scope>IDENTIFICATION BY MASS SPECTROMETRY [LARGE SCALE ANALYSIS]</scope>
</reference>
<reference evidence="10" key="3">
    <citation type="journal article" date="2008" name="Proc. Natl. Acad. Sci. U.S.A.">
        <title>Par3/Par6 polarity complex coordinates apical ectoplasmic specialization and blood-testis barrier restructuring during spermatogenesis.</title>
        <authorList>
            <person name="Wong E.W."/>
            <person name="Mruk D.D."/>
            <person name="Lee W.M."/>
            <person name="Cheng C.Y."/>
        </authorList>
    </citation>
    <scope>TISSUE SPECIFICITY</scope>
</reference>
<reference evidence="10" key="4">
    <citation type="journal article" date="2012" name="J. Biol. Chem.">
        <title>Structure of an L27 domain heterotrimer from cell polarity complex Patj/Pals1/Mals2 reveals mutually independent L27 domain assembly mode.</title>
        <authorList>
            <person name="Zhang J."/>
            <person name="Yang X."/>
            <person name="Wang Z."/>
            <person name="Zhou H."/>
            <person name="Xie X."/>
            <person name="Shen Y."/>
            <person name="Long J."/>
        </authorList>
    </citation>
    <scope>X-RAY CRYSTALLOGRAPHY (2.05 ANGSTROMS) OF 1-68 IN COMPLEX WITH MOUSE LIN7B AND HUMAN PALS1</scope>
</reference>
<organism evidence="11">
    <name type="scientific">Rattus norvegicus</name>
    <name type="common">Rat</name>
    <dbReference type="NCBI Taxonomy" id="10116"/>
    <lineage>
        <taxon>Eukaryota</taxon>
        <taxon>Metazoa</taxon>
        <taxon>Chordata</taxon>
        <taxon>Craniata</taxon>
        <taxon>Vertebrata</taxon>
        <taxon>Euteleostomi</taxon>
        <taxon>Mammalia</taxon>
        <taxon>Eutheria</taxon>
        <taxon>Euarchontoglires</taxon>
        <taxon>Glires</taxon>
        <taxon>Rodentia</taxon>
        <taxon>Myomorpha</taxon>
        <taxon>Muroidea</taxon>
        <taxon>Muridae</taxon>
        <taxon>Murinae</taxon>
        <taxon>Rattus</taxon>
    </lineage>
</organism>
<gene>
    <name evidence="12" type="primary">Patj</name>
    <name evidence="3" type="synonym">Cipp</name>
    <name evidence="4" type="synonym">Inadl</name>
</gene>